<sequence>MQRLVEIERFDSEESVEVTLRPSAWNEYIGQEQIKKNLGVFIEASKKRAEALDHVLFYGPPGLGKTTLALIIANEMNANIKVTAAPMIEKSGDLAAILTNLEEGDVLFIDEIHRLSPAVEEILYSSMEDFRIDIIIGSGPAAQTLKIDLPRFTLIGATTRAGMLSNPLRDRFGMNFRMQFYSPEELSKIISQASNKLNKKIADEACSEIAKRSRGTPRIALRLLRRVRDFADVANEKDILHSRAQYALDELGINSYGFDEMDIKLLNLLVGANGRAMGLSTIAAALSEDEGTVEDVLEPYLIANGYLERTAKGRKATPSTYKILNVTMPALDDGGLF</sequence>
<organism>
    <name type="scientific">Sulfurimonas denitrificans (strain ATCC 33889 / DSM 1251)</name>
    <name type="common">Thiomicrospira denitrificans (strain ATCC 33889 / DSM 1251)</name>
    <dbReference type="NCBI Taxonomy" id="326298"/>
    <lineage>
        <taxon>Bacteria</taxon>
        <taxon>Pseudomonadati</taxon>
        <taxon>Campylobacterota</taxon>
        <taxon>Epsilonproteobacteria</taxon>
        <taxon>Campylobacterales</taxon>
        <taxon>Sulfurimonadaceae</taxon>
        <taxon>Sulfurimonas</taxon>
    </lineage>
</organism>
<accession>Q30PX6</accession>
<gene>
    <name evidence="1" type="primary">ruvB</name>
    <name type="ordered locus">Suden_1678</name>
</gene>
<feature type="chain" id="PRO_0000235427" description="Holliday junction branch migration complex subunit RuvB">
    <location>
        <begin position="1"/>
        <end position="337"/>
    </location>
</feature>
<feature type="region of interest" description="Large ATPase domain (RuvB-L)" evidence="1">
    <location>
        <begin position="1"/>
        <end position="181"/>
    </location>
</feature>
<feature type="region of interest" description="Small ATPAse domain (RuvB-S)" evidence="1">
    <location>
        <begin position="182"/>
        <end position="252"/>
    </location>
</feature>
<feature type="region of interest" description="Head domain (RuvB-H)" evidence="1">
    <location>
        <begin position="255"/>
        <end position="337"/>
    </location>
</feature>
<feature type="binding site" evidence="1">
    <location>
        <position position="20"/>
    </location>
    <ligand>
        <name>ATP</name>
        <dbReference type="ChEBI" id="CHEBI:30616"/>
    </ligand>
</feature>
<feature type="binding site" evidence="1">
    <location>
        <position position="21"/>
    </location>
    <ligand>
        <name>ATP</name>
        <dbReference type="ChEBI" id="CHEBI:30616"/>
    </ligand>
</feature>
<feature type="binding site" evidence="1">
    <location>
        <position position="62"/>
    </location>
    <ligand>
        <name>ATP</name>
        <dbReference type="ChEBI" id="CHEBI:30616"/>
    </ligand>
</feature>
<feature type="binding site" evidence="1">
    <location>
        <position position="65"/>
    </location>
    <ligand>
        <name>ATP</name>
        <dbReference type="ChEBI" id="CHEBI:30616"/>
    </ligand>
</feature>
<feature type="binding site" evidence="1">
    <location>
        <position position="66"/>
    </location>
    <ligand>
        <name>ATP</name>
        <dbReference type="ChEBI" id="CHEBI:30616"/>
    </ligand>
</feature>
<feature type="binding site" evidence="1">
    <location>
        <position position="66"/>
    </location>
    <ligand>
        <name>Mg(2+)</name>
        <dbReference type="ChEBI" id="CHEBI:18420"/>
    </ligand>
</feature>
<feature type="binding site" evidence="1">
    <location>
        <position position="67"/>
    </location>
    <ligand>
        <name>ATP</name>
        <dbReference type="ChEBI" id="CHEBI:30616"/>
    </ligand>
</feature>
<feature type="binding site" evidence="1">
    <location>
        <begin position="128"/>
        <end position="130"/>
    </location>
    <ligand>
        <name>ATP</name>
        <dbReference type="ChEBI" id="CHEBI:30616"/>
    </ligand>
</feature>
<feature type="binding site" evidence="1">
    <location>
        <position position="171"/>
    </location>
    <ligand>
        <name>ATP</name>
        <dbReference type="ChEBI" id="CHEBI:30616"/>
    </ligand>
</feature>
<feature type="binding site" evidence="1">
    <location>
        <position position="181"/>
    </location>
    <ligand>
        <name>ATP</name>
        <dbReference type="ChEBI" id="CHEBI:30616"/>
    </ligand>
</feature>
<feature type="binding site" evidence="1">
    <location>
        <position position="218"/>
    </location>
    <ligand>
        <name>ATP</name>
        <dbReference type="ChEBI" id="CHEBI:30616"/>
    </ligand>
</feature>
<feature type="binding site" evidence="1">
    <location>
        <position position="309"/>
    </location>
    <ligand>
        <name>DNA</name>
        <dbReference type="ChEBI" id="CHEBI:16991"/>
    </ligand>
</feature>
<feature type="binding site" evidence="1">
    <location>
        <position position="314"/>
    </location>
    <ligand>
        <name>DNA</name>
        <dbReference type="ChEBI" id="CHEBI:16991"/>
    </ligand>
</feature>
<protein>
    <recommendedName>
        <fullName evidence="1">Holliday junction branch migration complex subunit RuvB</fullName>
        <ecNumber evidence="1">3.6.4.-</ecNumber>
    </recommendedName>
</protein>
<reference key="1">
    <citation type="journal article" date="2008" name="Appl. Environ. Microbiol.">
        <title>Genome of the epsilonproteobacterial chemolithoautotroph Sulfurimonas denitrificans.</title>
        <authorList>
            <person name="Sievert S.M."/>
            <person name="Scott K.M."/>
            <person name="Klotz M.G."/>
            <person name="Chain P.S.G."/>
            <person name="Hauser L.J."/>
            <person name="Hemp J."/>
            <person name="Huegler M."/>
            <person name="Land M."/>
            <person name="Lapidus A."/>
            <person name="Larimer F.W."/>
            <person name="Lucas S."/>
            <person name="Malfatti S.A."/>
            <person name="Meyer F."/>
            <person name="Paulsen I.T."/>
            <person name="Ren Q."/>
            <person name="Simon J."/>
            <person name="Bailey K."/>
            <person name="Diaz E."/>
            <person name="Fitzpatrick K.A."/>
            <person name="Glover B."/>
            <person name="Gwatney N."/>
            <person name="Korajkic A."/>
            <person name="Long A."/>
            <person name="Mobberley J.M."/>
            <person name="Pantry S.N."/>
            <person name="Pazder G."/>
            <person name="Peterson S."/>
            <person name="Quintanilla J.D."/>
            <person name="Sprinkle R."/>
            <person name="Stephens J."/>
            <person name="Thomas P."/>
            <person name="Vaughn R."/>
            <person name="Weber M.J."/>
            <person name="Wooten L.L."/>
        </authorList>
    </citation>
    <scope>NUCLEOTIDE SEQUENCE [LARGE SCALE GENOMIC DNA]</scope>
    <source>
        <strain>ATCC 33889 / DSM 1251</strain>
    </source>
</reference>
<proteinExistence type="inferred from homology"/>
<name>RUVB_SULDN</name>
<keyword id="KW-0067">ATP-binding</keyword>
<keyword id="KW-0963">Cytoplasm</keyword>
<keyword id="KW-0227">DNA damage</keyword>
<keyword id="KW-0233">DNA recombination</keyword>
<keyword id="KW-0234">DNA repair</keyword>
<keyword id="KW-0238">DNA-binding</keyword>
<keyword id="KW-0378">Hydrolase</keyword>
<keyword id="KW-0547">Nucleotide-binding</keyword>
<keyword id="KW-1185">Reference proteome</keyword>
<comment type="function">
    <text evidence="1">The RuvA-RuvB-RuvC complex processes Holliday junction (HJ) DNA during genetic recombination and DNA repair, while the RuvA-RuvB complex plays an important role in the rescue of blocked DNA replication forks via replication fork reversal (RFR). RuvA specifically binds to HJ cruciform DNA, conferring on it an open structure. The RuvB hexamer acts as an ATP-dependent pump, pulling dsDNA into and through the RuvAB complex. RuvB forms 2 homohexamers on either side of HJ DNA bound by 1 or 2 RuvA tetramers; 4 subunits per hexamer contact DNA at a time. Coordinated motions by a converter formed by DNA-disengaged RuvB subunits stimulates ATP hydrolysis and nucleotide exchange. Immobilization of the converter enables RuvB to convert the ATP-contained energy into a lever motion, pulling 2 nucleotides of DNA out of the RuvA tetramer per ATP hydrolyzed, thus driving DNA branch migration. The RuvB motors rotate together with the DNA substrate, which together with the progressing nucleotide cycle form the mechanistic basis for DNA recombination by continuous HJ branch migration. Branch migration allows RuvC to scan DNA until it finds its consensus sequence, where it cleaves and resolves cruciform DNA.</text>
</comment>
<comment type="catalytic activity">
    <reaction evidence="1">
        <text>ATP + H2O = ADP + phosphate + H(+)</text>
        <dbReference type="Rhea" id="RHEA:13065"/>
        <dbReference type="ChEBI" id="CHEBI:15377"/>
        <dbReference type="ChEBI" id="CHEBI:15378"/>
        <dbReference type="ChEBI" id="CHEBI:30616"/>
        <dbReference type="ChEBI" id="CHEBI:43474"/>
        <dbReference type="ChEBI" id="CHEBI:456216"/>
    </reaction>
</comment>
<comment type="subunit">
    <text evidence="1">Homohexamer. Forms an RuvA(8)-RuvB(12)-Holliday junction (HJ) complex. HJ DNA is sandwiched between 2 RuvA tetramers; dsDNA enters through RuvA and exits via RuvB. An RuvB hexamer assembles on each DNA strand where it exits the tetramer. Each RuvB hexamer is contacted by two RuvA subunits (via domain III) on 2 adjacent RuvB subunits; this complex drives branch migration. In the full resolvosome a probable DNA-RuvA(4)-RuvB(12)-RuvC(2) complex forms which resolves the HJ.</text>
</comment>
<comment type="subcellular location">
    <subcellularLocation>
        <location evidence="1">Cytoplasm</location>
    </subcellularLocation>
</comment>
<comment type="domain">
    <text evidence="1">Has 3 domains, the large (RuvB-L) and small ATPase (RuvB-S) domains and the C-terminal head (RuvB-H) domain. The head domain binds DNA, while the ATPase domains jointly bind ATP, ADP or are empty depending on the state of the subunit in the translocation cycle. During a single DNA translocation step the structure of each domain remains the same, but their relative positions change.</text>
</comment>
<comment type="similarity">
    <text evidence="1">Belongs to the RuvB family.</text>
</comment>
<evidence type="ECO:0000255" key="1">
    <source>
        <dbReference type="HAMAP-Rule" id="MF_00016"/>
    </source>
</evidence>
<dbReference type="EC" id="3.6.4.-" evidence="1"/>
<dbReference type="EMBL" id="CP000153">
    <property type="protein sequence ID" value="ABB44955.1"/>
    <property type="molecule type" value="Genomic_DNA"/>
</dbReference>
<dbReference type="RefSeq" id="WP_011373296.1">
    <property type="nucleotide sequence ID" value="NC_007575.1"/>
</dbReference>
<dbReference type="SMR" id="Q30PX6"/>
<dbReference type="STRING" id="326298.Suden_1678"/>
<dbReference type="KEGG" id="tdn:Suden_1678"/>
<dbReference type="eggNOG" id="COG2255">
    <property type="taxonomic scope" value="Bacteria"/>
</dbReference>
<dbReference type="HOGENOM" id="CLU_055599_1_0_7"/>
<dbReference type="OrthoDB" id="9804478at2"/>
<dbReference type="Proteomes" id="UP000002714">
    <property type="component" value="Chromosome"/>
</dbReference>
<dbReference type="GO" id="GO:0005737">
    <property type="term" value="C:cytoplasm"/>
    <property type="evidence" value="ECO:0007669"/>
    <property type="project" value="UniProtKB-SubCell"/>
</dbReference>
<dbReference type="GO" id="GO:0048476">
    <property type="term" value="C:Holliday junction resolvase complex"/>
    <property type="evidence" value="ECO:0007669"/>
    <property type="project" value="UniProtKB-UniRule"/>
</dbReference>
<dbReference type="GO" id="GO:0005524">
    <property type="term" value="F:ATP binding"/>
    <property type="evidence" value="ECO:0007669"/>
    <property type="project" value="UniProtKB-UniRule"/>
</dbReference>
<dbReference type="GO" id="GO:0016887">
    <property type="term" value="F:ATP hydrolysis activity"/>
    <property type="evidence" value="ECO:0007669"/>
    <property type="project" value="InterPro"/>
</dbReference>
<dbReference type="GO" id="GO:0000400">
    <property type="term" value="F:four-way junction DNA binding"/>
    <property type="evidence" value="ECO:0007669"/>
    <property type="project" value="UniProtKB-UniRule"/>
</dbReference>
<dbReference type="GO" id="GO:0009378">
    <property type="term" value="F:four-way junction helicase activity"/>
    <property type="evidence" value="ECO:0007669"/>
    <property type="project" value="InterPro"/>
</dbReference>
<dbReference type="GO" id="GO:0006310">
    <property type="term" value="P:DNA recombination"/>
    <property type="evidence" value="ECO:0007669"/>
    <property type="project" value="UniProtKB-UniRule"/>
</dbReference>
<dbReference type="GO" id="GO:0006281">
    <property type="term" value="P:DNA repair"/>
    <property type="evidence" value="ECO:0007669"/>
    <property type="project" value="UniProtKB-UniRule"/>
</dbReference>
<dbReference type="CDD" id="cd00009">
    <property type="entry name" value="AAA"/>
    <property type="match status" value="1"/>
</dbReference>
<dbReference type="Gene3D" id="1.10.8.60">
    <property type="match status" value="1"/>
</dbReference>
<dbReference type="Gene3D" id="3.40.50.300">
    <property type="entry name" value="P-loop containing nucleotide triphosphate hydrolases"/>
    <property type="match status" value="1"/>
</dbReference>
<dbReference type="Gene3D" id="1.10.10.10">
    <property type="entry name" value="Winged helix-like DNA-binding domain superfamily/Winged helix DNA-binding domain"/>
    <property type="match status" value="1"/>
</dbReference>
<dbReference type="HAMAP" id="MF_00016">
    <property type="entry name" value="DNA_HJ_migration_RuvB"/>
    <property type="match status" value="1"/>
</dbReference>
<dbReference type="InterPro" id="IPR003593">
    <property type="entry name" value="AAA+_ATPase"/>
</dbReference>
<dbReference type="InterPro" id="IPR041445">
    <property type="entry name" value="AAA_lid_4"/>
</dbReference>
<dbReference type="InterPro" id="IPR004605">
    <property type="entry name" value="DNA_helicase_Holl-junc_RuvB"/>
</dbReference>
<dbReference type="InterPro" id="IPR027417">
    <property type="entry name" value="P-loop_NTPase"/>
</dbReference>
<dbReference type="InterPro" id="IPR008824">
    <property type="entry name" value="RuvB-like_N"/>
</dbReference>
<dbReference type="InterPro" id="IPR008823">
    <property type="entry name" value="RuvB_C"/>
</dbReference>
<dbReference type="InterPro" id="IPR036388">
    <property type="entry name" value="WH-like_DNA-bd_sf"/>
</dbReference>
<dbReference type="InterPro" id="IPR036390">
    <property type="entry name" value="WH_DNA-bd_sf"/>
</dbReference>
<dbReference type="NCBIfam" id="NF000868">
    <property type="entry name" value="PRK00080.1"/>
    <property type="match status" value="1"/>
</dbReference>
<dbReference type="NCBIfam" id="TIGR00635">
    <property type="entry name" value="ruvB"/>
    <property type="match status" value="1"/>
</dbReference>
<dbReference type="PANTHER" id="PTHR42848">
    <property type="match status" value="1"/>
</dbReference>
<dbReference type="PANTHER" id="PTHR42848:SF1">
    <property type="entry name" value="HOLLIDAY JUNCTION BRANCH MIGRATION COMPLEX SUBUNIT RUVB"/>
    <property type="match status" value="1"/>
</dbReference>
<dbReference type="Pfam" id="PF17864">
    <property type="entry name" value="AAA_lid_4"/>
    <property type="match status" value="1"/>
</dbReference>
<dbReference type="Pfam" id="PF05491">
    <property type="entry name" value="RuvB_C"/>
    <property type="match status" value="1"/>
</dbReference>
<dbReference type="Pfam" id="PF05496">
    <property type="entry name" value="RuvB_N"/>
    <property type="match status" value="1"/>
</dbReference>
<dbReference type="SMART" id="SM00382">
    <property type="entry name" value="AAA"/>
    <property type="match status" value="1"/>
</dbReference>
<dbReference type="SUPFAM" id="SSF52540">
    <property type="entry name" value="P-loop containing nucleoside triphosphate hydrolases"/>
    <property type="match status" value="1"/>
</dbReference>
<dbReference type="SUPFAM" id="SSF46785">
    <property type="entry name" value="Winged helix' DNA-binding domain"/>
    <property type="match status" value="1"/>
</dbReference>